<proteinExistence type="evidence at transcript level"/>
<accession>C0JB55</accession>
<reference key="1">
    <citation type="journal article" date="2009" name="Mol. Biol. Evol.">
        <title>Molecular evolution, functional variation, and proposed nomenclature of the gene family that includes sphingomyelinase D in sicariid spider venoms.</title>
        <authorList>
            <person name="Binford G.J."/>
            <person name="Bodner M.R."/>
            <person name="Cordes M.H."/>
            <person name="Baldwin K.L."/>
            <person name="Rynerson M.R."/>
            <person name="Burns S.N."/>
            <person name="Zobel-Thropp P.A."/>
        </authorList>
    </citation>
    <scope>NUCLEOTIDE SEQUENCE [MRNA]</scope>
    <scope>NOMENCLATURE</scope>
    <source>
        <tissue>Venom gland</tissue>
    </source>
</reference>
<protein>
    <recommendedName>
        <fullName evidence="6">Dermonecrotic toxin SdSicTox-betaIF1</fullName>
        <ecNumber evidence="4">4.6.1.-</ecNumber>
    </recommendedName>
    <alternativeName>
        <fullName>Phospholipase D</fullName>
        <shortName>PLD</shortName>
    </alternativeName>
    <alternativeName>
        <fullName>Sphingomyelin phosphodiesterase D</fullName>
        <shortName>SMD</shortName>
        <shortName>SMase D</shortName>
        <shortName>Sphingomyelinase D</shortName>
    </alternativeName>
</protein>
<organism>
    <name type="scientific">Sicarius cf. damarensis (strain GJB-2008)</name>
    <name type="common">Six-eyed sand spider</name>
    <dbReference type="NCBI Taxonomy" id="575956"/>
    <lineage>
        <taxon>Eukaryota</taxon>
        <taxon>Metazoa</taxon>
        <taxon>Ecdysozoa</taxon>
        <taxon>Arthropoda</taxon>
        <taxon>Chelicerata</taxon>
        <taxon>Arachnida</taxon>
        <taxon>Araneae</taxon>
        <taxon>Araneomorphae</taxon>
        <taxon>Haplogynae</taxon>
        <taxon>Scytodoidea</taxon>
        <taxon>Sicariidae</taxon>
        <taxon>Sicarius</taxon>
    </lineage>
</organism>
<comment type="function">
    <text evidence="1 3">Dermonecrotic toxins cleave the phosphodiester linkage between the phosphate and headgroup of certain phospholipids (sphingolipid and lysolipid substrates), forming an alcohol (often choline) and a cyclic phosphate (By similarity). This toxin acts on sphingomyelin (SM) (By similarity). It may also act on ceramide phosphoethanolamine (CPE), lysophosphatidylcholine (LPC) and lysophosphatidylethanolamine (LPE), but not on lysophosphatidylserine (LPS), and lysophosphatidylglycerol (LPG) (By similarity). It acts by transphosphatidylation, releasing exclusively cyclic phosphate products as second products (By similarity). Induces dermonecrosis, hemolysis, increased vascular permeability, edema, inflammatory response, and platelet aggregation (By similarity).</text>
</comment>
<comment type="catalytic activity">
    <reaction evidence="1">
        <text>an N-(acyl)-sphingosylphosphocholine = an N-(acyl)-sphingosyl-1,3-cyclic phosphate + choline</text>
        <dbReference type="Rhea" id="RHEA:60652"/>
        <dbReference type="ChEBI" id="CHEBI:15354"/>
        <dbReference type="ChEBI" id="CHEBI:64583"/>
        <dbReference type="ChEBI" id="CHEBI:143892"/>
    </reaction>
</comment>
<comment type="catalytic activity">
    <reaction evidence="1">
        <text>an N-(acyl)-sphingosylphosphoethanolamine = an N-(acyl)-sphingosyl-1,3-cyclic phosphate + ethanolamine</text>
        <dbReference type="Rhea" id="RHEA:60648"/>
        <dbReference type="ChEBI" id="CHEBI:57603"/>
        <dbReference type="ChEBI" id="CHEBI:143891"/>
        <dbReference type="ChEBI" id="CHEBI:143892"/>
    </reaction>
</comment>
<comment type="catalytic activity">
    <reaction evidence="1">
        <text>a 1-acyl-sn-glycero-3-phosphocholine = a 1-acyl-sn-glycero-2,3-cyclic phosphate + choline</text>
        <dbReference type="Rhea" id="RHEA:60700"/>
        <dbReference type="ChEBI" id="CHEBI:15354"/>
        <dbReference type="ChEBI" id="CHEBI:58168"/>
        <dbReference type="ChEBI" id="CHEBI:143947"/>
    </reaction>
</comment>
<comment type="catalytic activity">
    <reaction evidence="1">
        <text>a 1-acyl-sn-glycero-3-phosphoethanolamine = a 1-acyl-sn-glycero-2,3-cyclic phosphate + ethanolamine</text>
        <dbReference type="Rhea" id="RHEA:60704"/>
        <dbReference type="ChEBI" id="CHEBI:57603"/>
        <dbReference type="ChEBI" id="CHEBI:64381"/>
        <dbReference type="ChEBI" id="CHEBI:143947"/>
    </reaction>
</comment>
<comment type="cofactor">
    <cofactor evidence="5">
        <name>Mg(2+)</name>
        <dbReference type="ChEBI" id="CHEBI:18420"/>
    </cofactor>
    <text evidence="5">Binds 1 Mg(2+) ion per subunit.</text>
</comment>
<comment type="subcellular location">
    <subcellularLocation>
        <location evidence="8">Secreted</location>
    </subcellularLocation>
</comment>
<comment type="tissue specificity">
    <text evidence="8">Expressed by the venom gland.</text>
</comment>
<comment type="similarity">
    <text evidence="7">Belongs to the arthropod phospholipase D family. Class II subfamily.</text>
</comment>
<comment type="caution">
    <text evidence="1 2 4">The most common activity assay for dermonecrotic toxins detects enzymatic activity by monitoring choline release from substrate. Liberation of choline from sphingomyelin (SM) or lysophosphatidylcholine (LPC) is commonly assumed to result from substrate hydrolysis, giving either ceramide-1-phosphate (C1P) or lysophosphatidic acid (LPA), respectively, as a second product. However, two studies from Lajoie and colleagues (2013 and 2015) report the observation of exclusive formation of cyclic phosphate products as second products, resulting from intramolecular transphosphatidylation. Cyclic phosphates have vastly different biological properties from their monoester counterparts, and they may be relevant to the pathology of brown spider envenomation.</text>
</comment>
<keyword id="KW-0204">Cytolysis</keyword>
<keyword id="KW-1061">Dermonecrotic toxin</keyword>
<keyword id="KW-1015">Disulfide bond</keyword>
<keyword id="KW-0354">Hemolysis</keyword>
<keyword id="KW-0442">Lipid degradation</keyword>
<keyword id="KW-0443">Lipid metabolism</keyword>
<keyword id="KW-0456">Lyase</keyword>
<keyword id="KW-0460">Magnesium</keyword>
<keyword id="KW-0479">Metal-binding</keyword>
<keyword id="KW-0964">Secreted</keyword>
<keyword id="KW-0800">Toxin</keyword>
<feature type="chain" id="PRO_0000392867" description="Dermonecrotic toxin SdSicTox-betaIF1">
    <location>
        <begin position="1" status="less than"/>
        <end position="273"/>
    </location>
</feature>
<feature type="active site" evidence="5">
    <location>
        <position position="5"/>
    </location>
</feature>
<feature type="active site" description="Nucleophile" evidence="5">
    <location>
        <position position="41"/>
    </location>
</feature>
<feature type="binding site" evidence="5">
    <location>
        <position position="25"/>
    </location>
    <ligand>
        <name>Mg(2+)</name>
        <dbReference type="ChEBI" id="CHEBI:18420"/>
    </ligand>
</feature>
<feature type="binding site" evidence="5">
    <location>
        <position position="27"/>
    </location>
    <ligand>
        <name>Mg(2+)</name>
        <dbReference type="ChEBI" id="CHEBI:18420"/>
    </ligand>
</feature>
<feature type="disulfide bond" evidence="3">
    <location>
        <begin position="45"/>
        <end position="51"/>
    </location>
</feature>
<feature type="disulfide bond" evidence="3">
    <location>
        <begin position="47"/>
        <end position="189"/>
    </location>
</feature>
<feature type="non-terminal residue">
    <location>
        <position position="1"/>
    </location>
</feature>
<evidence type="ECO:0000250" key="1">
    <source>
        <dbReference type="UniProtKB" id="A0A0D4WTV1"/>
    </source>
</evidence>
<evidence type="ECO:0000250" key="2">
    <source>
        <dbReference type="UniProtKB" id="A0A0D4WV12"/>
    </source>
</evidence>
<evidence type="ECO:0000250" key="3">
    <source>
        <dbReference type="UniProtKB" id="P0CE80"/>
    </source>
</evidence>
<evidence type="ECO:0000250" key="4">
    <source>
        <dbReference type="UniProtKB" id="Q4ZFU2"/>
    </source>
</evidence>
<evidence type="ECO:0000250" key="5">
    <source>
        <dbReference type="UniProtKB" id="Q8I914"/>
    </source>
</evidence>
<evidence type="ECO:0000303" key="6">
    <source>
    </source>
</evidence>
<evidence type="ECO:0000305" key="7"/>
<evidence type="ECO:0000305" key="8">
    <source>
    </source>
</evidence>
<sequence>WIMGHMVDDIAMVDDFLDNGANGLELDISFDSNGKAEYTYHGTPCDCFRSCTRYESFDKYMEYVREISTPGNQKFRKSLIMLIMYLKLNSLYANQLYTAGSDIADQLARHYWKDDGAARAYMVLSLPSITQTEFIRGFKNRMESQGLQKYYAKIGWDFTGNEDLDDIEATYKKLNITEHIWQSDGITNCLNRGTDRLEDAIRRRDKPGNKYINKVYLWSIDKMSSIRDALDKGVDGIMVNYADRFIDVLKESKYSSKYRLATYEDNPWETFRP</sequence>
<name>B1V_SICCD</name>
<dbReference type="EC" id="4.6.1.-" evidence="4"/>
<dbReference type="EMBL" id="FJ171490">
    <property type="protein sequence ID" value="ACN48986.1"/>
    <property type="molecule type" value="mRNA"/>
</dbReference>
<dbReference type="SMR" id="C0JB55"/>
<dbReference type="GO" id="GO:0005576">
    <property type="term" value="C:extracellular region"/>
    <property type="evidence" value="ECO:0007669"/>
    <property type="project" value="UniProtKB-SubCell"/>
</dbReference>
<dbReference type="GO" id="GO:0016829">
    <property type="term" value="F:lyase activity"/>
    <property type="evidence" value="ECO:0007669"/>
    <property type="project" value="UniProtKB-KW"/>
</dbReference>
<dbReference type="GO" id="GO:0046872">
    <property type="term" value="F:metal ion binding"/>
    <property type="evidence" value="ECO:0007669"/>
    <property type="project" value="UniProtKB-KW"/>
</dbReference>
<dbReference type="GO" id="GO:0008081">
    <property type="term" value="F:phosphoric diester hydrolase activity"/>
    <property type="evidence" value="ECO:0007669"/>
    <property type="project" value="InterPro"/>
</dbReference>
<dbReference type="GO" id="GO:0090729">
    <property type="term" value="F:toxin activity"/>
    <property type="evidence" value="ECO:0007669"/>
    <property type="project" value="UniProtKB-KW"/>
</dbReference>
<dbReference type="GO" id="GO:0031640">
    <property type="term" value="P:killing of cells of another organism"/>
    <property type="evidence" value="ECO:0007669"/>
    <property type="project" value="UniProtKB-KW"/>
</dbReference>
<dbReference type="GO" id="GO:0016042">
    <property type="term" value="P:lipid catabolic process"/>
    <property type="evidence" value="ECO:0007669"/>
    <property type="project" value="UniProtKB-KW"/>
</dbReference>
<dbReference type="CDD" id="cd08576">
    <property type="entry name" value="GDPD_like_SMaseD_PLD"/>
    <property type="match status" value="1"/>
</dbReference>
<dbReference type="Gene3D" id="3.20.20.190">
    <property type="entry name" value="Phosphatidylinositol (PI) phosphodiesterase"/>
    <property type="match status" value="1"/>
</dbReference>
<dbReference type="InterPro" id="IPR017946">
    <property type="entry name" value="PLC-like_Pdiesterase_TIM-brl"/>
</dbReference>
<dbReference type="SUPFAM" id="SSF51695">
    <property type="entry name" value="PLC-like phosphodiesterases"/>
    <property type="match status" value="1"/>
</dbReference>